<name>TIM21_EREGS</name>
<comment type="function">
    <text evidence="1">Essential component of the TIM23 complex, a complex that mediates the translocation of transit peptide-containing proteins across the mitochondrial inner membrane. Required to keep the TOM and the TIM23 complexes in close contact. At some point, it is released from the TOM23 complex to allow protein translocation into the mitochondrial matrix (By similarity).</text>
</comment>
<comment type="subunit">
    <text evidence="1">Component of the TIM23 complex, at least composed of TIM23, TIM17, TIM50 and TIM21.</text>
</comment>
<comment type="subcellular location">
    <subcellularLocation>
        <location evidence="1">Mitochondrion inner membrane</location>
        <topology evidence="1">Single-pass membrane protein</topology>
    </subcellularLocation>
</comment>
<comment type="similarity">
    <text evidence="3">Belongs to the TIM21 family.</text>
</comment>
<evidence type="ECO:0000250" key="1"/>
<evidence type="ECO:0000255" key="2"/>
<evidence type="ECO:0000305" key="3"/>
<feature type="transit peptide" description="Mitochondrion" evidence="2">
    <location>
        <begin position="1"/>
        <end status="unknown"/>
    </location>
</feature>
<feature type="chain" id="PRO_0000043140" description="Mitochondrial import inner membrane translocase subunit TIM21">
    <location>
        <begin status="unknown"/>
        <end position="234"/>
    </location>
</feature>
<feature type="topological domain" description="Mitochondrial matrix" evidence="2">
    <location>
        <begin status="unknown"/>
        <end position="71"/>
    </location>
</feature>
<feature type="transmembrane region" description="Helical" evidence="2">
    <location>
        <begin position="72"/>
        <end position="92"/>
    </location>
</feature>
<feature type="topological domain" description="Mitochondrial intermembrane" evidence="2">
    <location>
        <begin position="93"/>
        <end position="234"/>
    </location>
</feature>
<accession>Q75CX4</accession>
<protein>
    <recommendedName>
        <fullName>Mitochondrial import inner membrane translocase subunit TIM21</fullName>
    </recommendedName>
</protein>
<keyword id="KW-0472">Membrane</keyword>
<keyword id="KW-0496">Mitochondrion</keyword>
<keyword id="KW-0999">Mitochondrion inner membrane</keyword>
<keyword id="KW-0653">Protein transport</keyword>
<keyword id="KW-1185">Reference proteome</keyword>
<keyword id="KW-0809">Transit peptide</keyword>
<keyword id="KW-0811">Translocation</keyword>
<keyword id="KW-0812">Transmembrane</keyword>
<keyword id="KW-1133">Transmembrane helix</keyword>
<keyword id="KW-0813">Transport</keyword>
<dbReference type="EMBL" id="AE016816">
    <property type="protein sequence ID" value="AAS51045.1"/>
    <property type="molecule type" value="Genomic_DNA"/>
</dbReference>
<dbReference type="RefSeq" id="NP_983221.1">
    <property type="nucleotide sequence ID" value="NM_208574.1"/>
</dbReference>
<dbReference type="SMR" id="Q75CX4"/>
<dbReference type="FunCoup" id="Q75CX4">
    <property type="interactions" value="272"/>
</dbReference>
<dbReference type="STRING" id="284811.Q75CX4"/>
<dbReference type="EnsemblFungi" id="AAS51045">
    <property type="protein sequence ID" value="AAS51045"/>
    <property type="gene ID" value="AGOS_ACL183W"/>
</dbReference>
<dbReference type="GeneID" id="4619317"/>
<dbReference type="KEGG" id="ago:AGOS_ACL183W"/>
<dbReference type="eggNOG" id="KOG4836">
    <property type="taxonomic scope" value="Eukaryota"/>
</dbReference>
<dbReference type="HOGENOM" id="CLU_089043_1_0_1"/>
<dbReference type="InParanoid" id="Q75CX4"/>
<dbReference type="OMA" id="HVESKQK"/>
<dbReference type="OrthoDB" id="436405at2759"/>
<dbReference type="Proteomes" id="UP000000591">
    <property type="component" value="Chromosome III"/>
</dbReference>
<dbReference type="GO" id="GO:0005744">
    <property type="term" value="C:TIM23 mitochondrial import inner membrane translocase complex"/>
    <property type="evidence" value="ECO:0000318"/>
    <property type="project" value="GO_Central"/>
</dbReference>
<dbReference type="GO" id="GO:0030150">
    <property type="term" value="P:protein import into mitochondrial matrix"/>
    <property type="evidence" value="ECO:0000318"/>
    <property type="project" value="GO_Central"/>
</dbReference>
<dbReference type="FunFam" id="3.10.450.320:FF:000002">
    <property type="entry name" value="Mitochondrial import inner membrane translocase subunit tim21"/>
    <property type="match status" value="1"/>
</dbReference>
<dbReference type="Gene3D" id="3.10.450.320">
    <property type="entry name" value="Mitochondrial import inner membrane translocase subunit Tim21"/>
    <property type="match status" value="1"/>
</dbReference>
<dbReference type="InterPro" id="IPR013261">
    <property type="entry name" value="Tim21"/>
</dbReference>
<dbReference type="InterPro" id="IPR038552">
    <property type="entry name" value="Tim21_IMS_sf"/>
</dbReference>
<dbReference type="PANTHER" id="PTHR13032">
    <property type="entry name" value="MITOCHONDRIAL IMPORT INNER MEMBRANE TRANSLOCASE SUBUNIT TIM21"/>
    <property type="match status" value="1"/>
</dbReference>
<dbReference type="PANTHER" id="PTHR13032:SF6">
    <property type="entry name" value="MITOCHONDRIAL IMPORT INNER MEMBRANE TRANSLOCASE SUBUNIT TIM21"/>
    <property type="match status" value="1"/>
</dbReference>
<dbReference type="Pfam" id="PF08294">
    <property type="entry name" value="TIM21"/>
    <property type="match status" value="1"/>
</dbReference>
<sequence length="234" mass="25929">MLAFGSICGRLRAPAGAGLRVNVGKMPGRAWQVANGQPYSTFYAPPEQAGNRQKERRVTAWKKVRAAATFSASGMLVLGAAGVAGIVLYLILSELFSPSGDTQIFNRAVSTVEGDAVARSLLQCEDGVHRSERLKAYGDSVGDDRWTRNRPISSTRRLDASGREHYYMRFHVETGRRRGVVSLEAQQSDDSYQPEFVRMYLDVPGEKRHYLIRPEPSVAKPKGFLGLNWGPRKD</sequence>
<gene>
    <name type="primary">TIM21</name>
    <name type="ordered locus">ACL183W</name>
</gene>
<organism>
    <name type="scientific">Eremothecium gossypii (strain ATCC 10895 / CBS 109.51 / FGSC 9923 / NRRL Y-1056)</name>
    <name type="common">Yeast</name>
    <name type="synonym">Ashbya gossypii</name>
    <dbReference type="NCBI Taxonomy" id="284811"/>
    <lineage>
        <taxon>Eukaryota</taxon>
        <taxon>Fungi</taxon>
        <taxon>Dikarya</taxon>
        <taxon>Ascomycota</taxon>
        <taxon>Saccharomycotina</taxon>
        <taxon>Saccharomycetes</taxon>
        <taxon>Saccharomycetales</taxon>
        <taxon>Saccharomycetaceae</taxon>
        <taxon>Eremothecium</taxon>
    </lineage>
</organism>
<proteinExistence type="inferred from homology"/>
<reference key="1">
    <citation type="journal article" date="2004" name="Science">
        <title>The Ashbya gossypii genome as a tool for mapping the ancient Saccharomyces cerevisiae genome.</title>
        <authorList>
            <person name="Dietrich F.S."/>
            <person name="Voegeli S."/>
            <person name="Brachat S."/>
            <person name="Lerch A."/>
            <person name="Gates K."/>
            <person name="Steiner S."/>
            <person name="Mohr C."/>
            <person name="Poehlmann R."/>
            <person name="Luedi P."/>
            <person name="Choi S."/>
            <person name="Wing R.A."/>
            <person name="Flavier A."/>
            <person name="Gaffney T.D."/>
            <person name="Philippsen P."/>
        </authorList>
    </citation>
    <scope>NUCLEOTIDE SEQUENCE [LARGE SCALE GENOMIC DNA]</scope>
    <source>
        <strain>ATCC 10895 / CBS 109.51 / FGSC 9923 / NRRL Y-1056</strain>
    </source>
</reference>
<reference key="2">
    <citation type="journal article" date="2013" name="G3 (Bethesda)">
        <title>Genomes of Ashbya fungi isolated from insects reveal four mating-type loci, numerous translocations, lack of transposons, and distinct gene duplications.</title>
        <authorList>
            <person name="Dietrich F.S."/>
            <person name="Voegeli S."/>
            <person name="Kuo S."/>
            <person name="Philippsen P."/>
        </authorList>
    </citation>
    <scope>GENOME REANNOTATION</scope>
    <source>
        <strain>ATCC 10895 / CBS 109.51 / FGSC 9923 / NRRL Y-1056</strain>
    </source>
</reference>